<protein>
    <recommendedName>
        <fullName>Guanine nucleotide-binding protein subunit alpha homolog</fullName>
    </recommendedName>
    <alternativeName>
        <fullName>Protein concertina</fullName>
    </alternativeName>
</protein>
<feature type="chain" id="PRO_0000203776" description="Guanine nucleotide-binding protein subunit alpha homolog">
    <location>
        <begin position="1"/>
        <end position="457"/>
    </location>
</feature>
<feature type="domain" description="G-alpha" evidence="2">
    <location>
        <begin position="131"/>
        <end position="457"/>
    </location>
</feature>
<feature type="region of interest" description="G1 motif" evidence="2">
    <location>
        <begin position="134"/>
        <end position="147"/>
    </location>
</feature>
<feature type="region of interest" description="G2 motif" evidence="2">
    <location>
        <begin position="272"/>
        <end position="280"/>
    </location>
</feature>
<feature type="region of interest" description="G3 motif" evidence="2">
    <location>
        <begin position="295"/>
        <end position="304"/>
    </location>
</feature>
<feature type="region of interest" description="G4 motif" evidence="2">
    <location>
        <begin position="365"/>
        <end position="372"/>
    </location>
</feature>
<feature type="region of interest" description="G5 motif" evidence="2">
    <location>
        <begin position="427"/>
        <end position="432"/>
    </location>
</feature>
<feature type="binding site" evidence="1">
    <location>
        <begin position="139"/>
        <end position="146"/>
    </location>
    <ligand>
        <name>GTP</name>
        <dbReference type="ChEBI" id="CHEBI:37565"/>
    </ligand>
</feature>
<feature type="binding site" evidence="1">
    <location>
        <position position="146"/>
    </location>
    <ligand>
        <name>Mg(2+)</name>
        <dbReference type="ChEBI" id="CHEBI:18420"/>
    </ligand>
</feature>
<feature type="binding site" evidence="1">
    <location>
        <begin position="274"/>
        <end position="280"/>
    </location>
    <ligand>
        <name>GTP</name>
        <dbReference type="ChEBI" id="CHEBI:37565"/>
    </ligand>
</feature>
<feature type="binding site" evidence="1">
    <location>
        <position position="280"/>
    </location>
    <ligand>
        <name>Mg(2+)</name>
        <dbReference type="ChEBI" id="CHEBI:18420"/>
    </ligand>
</feature>
<feature type="binding site" evidence="1">
    <location>
        <begin position="299"/>
        <end position="303"/>
    </location>
    <ligand>
        <name>GTP</name>
        <dbReference type="ChEBI" id="CHEBI:37565"/>
    </ligand>
</feature>
<feature type="binding site" evidence="1">
    <location>
        <begin position="369"/>
        <end position="372"/>
    </location>
    <ligand>
        <name>GTP</name>
        <dbReference type="ChEBI" id="CHEBI:37565"/>
    </ligand>
</feature>
<feature type="binding site" evidence="1">
    <location>
        <position position="429"/>
    </location>
    <ligand>
        <name>GTP</name>
        <dbReference type="ChEBI" id="CHEBI:37565"/>
    </ligand>
</feature>
<reference key="1">
    <citation type="journal article" date="1991" name="Cell">
        <title>The Drosophila gastrulation gene concertina encodes a G alpha-like protein.</title>
        <authorList>
            <person name="Parks S."/>
            <person name="Wieschaus E."/>
        </authorList>
    </citation>
    <scope>NUCLEOTIDE SEQUENCE [MRNA]</scope>
    <scope>FUNCTION</scope>
    <scope>SUBCELLULAR LOCATION</scope>
    <scope>TISSUE SPECIFICITY</scope>
    <scope>DEVELOPMENTAL STAGE</scope>
    <source>
        <strain>Oregon-R</strain>
        <tissue>Ovary</tissue>
    </source>
</reference>
<reference key="2">
    <citation type="journal article" date="2000" name="Science">
        <title>The genome sequence of Drosophila melanogaster.</title>
        <authorList>
            <person name="Adams M.D."/>
            <person name="Celniker S.E."/>
            <person name="Holt R.A."/>
            <person name="Evans C.A."/>
            <person name="Gocayne J.D."/>
            <person name="Amanatides P.G."/>
            <person name="Scherer S.E."/>
            <person name="Li P.W."/>
            <person name="Hoskins R.A."/>
            <person name="Galle R.F."/>
            <person name="George R.A."/>
            <person name="Lewis S.E."/>
            <person name="Richards S."/>
            <person name="Ashburner M."/>
            <person name="Henderson S.N."/>
            <person name="Sutton G.G."/>
            <person name="Wortman J.R."/>
            <person name="Yandell M.D."/>
            <person name="Zhang Q."/>
            <person name="Chen L.X."/>
            <person name="Brandon R.C."/>
            <person name="Rogers Y.-H.C."/>
            <person name="Blazej R.G."/>
            <person name="Champe M."/>
            <person name="Pfeiffer B.D."/>
            <person name="Wan K.H."/>
            <person name="Doyle C."/>
            <person name="Baxter E.G."/>
            <person name="Helt G."/>
            <person name="Nelson C.R."/>
            <person name="Miklos G.L.G."/>
            <person name="Abril J.F."/>
            <person name="Agbayani A."/>
            <person name="An H.-J."/>
            <person name="Andrews-Pfannkoch C."/>
            <person name="Baldwin D."/>
            <person name="Ballew R.M."/>
            <person name="Basu A."/>
            <person name="Baxendale J."/>
            <person name="Bayraktaroglu L."/>
            <person name="Beasley E.M."/>
            <person name="Beeson K.Y."/>
            <person name="Benos P.V."/>
            <person name="Berman B.P."/>
            <person name="Bhandari D."/>
            <person name="Bolshakov S."/>
            <person name="Borkova D."/>
            <person name="Botchan M.R."/>
            <person name="Bouck J."/>
            <person name="Brokstein P."/>
            <person name="Brottier P."/>
            <person name="Burtis K.C."/>
            <person name="Busam D.A."/>
            <person name="Butler H."/>
            <person name="Cadieu E."/>
            <person name="Center A."/>
            <person name="Chandra I."/>
            <person name="Cherry J.M."/>
            <person name="Cawley S."/>
            <person name="Dahlke C."/>
            <person name="Davenport L.B."/>
            <person name="Davies P."/>
            <person name="de Pablos B."/>
            <person name="Delcher A."/>
            <person name="Deng Z."/>
            <person name="Mays A.D."/>
            <person name="Dew I."/>
            <person name="Dietz S.M."/>
            <person name="Dodson K."/>
            <person name="Doup L.E."/>
            <person name="Downes M."/>
            <person name="Dugan-Rocha S."/>
            <person name="Dunkov B.C."/>
            <person name="Dunn P."/>
            <person name="Durbin K.J."/>
            <person name="Evangelista C.C."/>
            <person name="Ferraz C."/>
            <person name="Ferriera S."/>
            <person name="Fleischmann W."/>
            <person name="Fosler C."/>
            <person name="Gabrielian A.E."/>
            <person name="Garg N.S."/>
            <person name="Gelbart W.M."/>
            <person name="Glasser K."/>
            <person name="Glodek A."/>
            <person name="Gong F."/>
            <person name="Gorrell J.H."/>
            <person name="Gu Z."/>
            <person name="Guan P."/>
            <person name="Harris M."/>
            <person name="Harris N.L."/>
            <person name="Harvey D.A."/>
            <person name="Heiman T.J."/>
            <person name="Hernandez J.R."/>
            <person name="Houck J."/>
            <person name="Hostin D."/>
            <person name="Houston K.A."/>
            <person name="Howland T.J."/>
            <person name="Wei M.-H."/>
            <person name="Ibegwam C."/>
            <person name="Jalali M."/>
            <person name="Kalush F."/>
            <person name="Karpen G.H."/>
            <person name="Ke Z."/>
            <person name="Kennison J.A."/>
            <person name="Ketchum K.A."/>
            <person name="Kimmel B.E."/>
            <person name="Kodira C.D."/>
            <person name="Kraft C.L."/>
            <person name="Kravitz S."/>
            <person name="Kulp D."/>
            <person name="Lai Z."/>
            <person name="Lasko P."/>
            <person name="Lei Y."/>
            <person name="Levitsky A.A."/>
            <person name="Li J.H."/>
            <person name="Li Z."/>
            <person name="Liang Y."/>
            <person name="Lin X."/>
            <person name="Liu X."/>
            <person name="Mattei B."/>
            <person name="McIntosh T.C."/>
            <person name="McLeod M.P."/>
            <person name="McPherson D."/>
            <person name="Merkulov G."/>
            <person name="Milshina N.V."/>
            <person name="Mobarry C."/>
            <person name="Morris J."/>
            <person name="Moshrefi A."/>
            <person name="Mount S.M."/>
            <person name="Moy M."/>
            <person name="Murphy B."/>
            <person name="Murphy L."/>
            <person name="Muzny D.M."/>
            <person name="Nelson D.L."/>
            <person name="Nelson D.R."/>
            <person name="Nelson K.A."/>
            <person name="Nixon K."/>
            <person name="Nusskern D.R."/>
            <person name="Pacleb J.M."/>
            <person name="Palazzolo M."/>
            <person name="Pittman G.S."/>
            <person name="Pan S."/>
            <person name="Pollard J."/>
            <person name="Puri V."/>
            <person name="Reese M.G."/>
            <person name="Reinert K."/>
            <person name="Remington K."/>
            <person name="Saunders R.D.C."/>
            <person name="Scheeler F."/>
            <person name="Shen H."/>
            <person name="Shue B.C."/>
            <person name="Siden-Kiamos I."/>
            <person name="Simpson M."/>
            <person name="Skupski M.P."/>
            <person name="Smith T.J."/>
            <person name="Spier E."/>
            <person name="Spradling A.C."/>
            <person name="Stapleton M."/>
            <person name="Strong R."/>
            <person name="Sun E."/>
            <person name="Svirskas R."/>
            <person name="Tector C."/>
            <person name="Turner R."/>
            <person name="Venter E."/>
            <person name="Wang A.H."/>
            <person name="Wang X."/>
            <person name="Wang Z.-Y."/>
            <person name="Wassarman D.A."/>
            <person name="Weinstock G.M."/>
            <person name="Weissenbach J."/>
            <person name="Williams S.M."/>
            <person name="Woodage T."/>
            <person name="Worley K.C."/>
            <person name="Wu D."/>
            <person name="Yang S."/>
            <person name="Yao Q.A."/>
            <person name="Ye J."/>
            <person name="Yeh R.-F."/>
            <person name="Zaveri J.S."/>
            <person name="Zhan M."/>
            <person name="Zhang G."/>
            <person name="Zhao Q."/>
            <person name="Zheng L."/>
            <person name="Zheng X.H."/>
            <person name="Zhong F.N."/>
            <person name="Zhong W."/>
            <person name="Zhou X."/>
            <person name="Zhu S.C."/>
            <person name="Zhu X."/>
            <person name="Smith H.O."/>
            <person name="Gibbs R.A."/>
            <person name="Myers E.W."/>
            <person name="Rubin G.M."/>
            <person name="Venter J.C."/>
        </authorList>
    </citation>
    <scope>NUCLEOTIDE SEQUENCE [LARGE SCALE GENOMIC DNA]</scope>
    <source>
        <strain>Berkeley</strain>
    </source>
</reference>
<reference key="3">
    <citation type="journal article" date="2002" name="Genome Biol.">
        <title>Annotation of the Drosophila melanogaster euchromatic genome: a systematic review.</title>
        <authorList>
            <person name="Misra S."/>
            <person name="Crosby M.A."/>
            <person name="Mungall C.J."/>
            <person name="Matthews B.B."/>
            <person name="Campbell K.S."/>
            <person name="Hradecky P."/>
            <person name="Huang Y."/>
            <person name="Kaminker J.S."/>
            <person name="Millburn G.H."/>
            <person name="Prochnik S.E."/>
            <person name="Smith C.D."/>
            <person name="Tupy J.L."/>
            <person name="Whitfield E.J."/>
            <person name="Bayraktaroglu L."/>
            <person name="Berman B.P."/>
            <person name="Bettencourt B.R."/>
            <person name="Celniker S.E."/>
            <person name="de Grey A.D.N.J."/>
            <person name="Drysdale R.A."/>
            <person name="Harris N.L."/>
            <person name="Richter J."/>
            <person name="Russo S."/>
            <person name="Schroeder A.J."/>
            <person name="Shu S.Q."/>
            <person name="Stapleton M."/>
            <person name="Yamada C."/>
            <person name="Ashburner M."/>
            <person name="Gelbart W.M."/>
            <person name="Rubin G.M."/>
            <person name="Lewis S.E."/>
        </authorList>
    </citation>
    <scope>GENOME REANNOTATION</scope>
    <source>
        <strain>Berkeley</strain>
    </source>
</reference>
<reference key="4">
    <citation type="journal article" date="2002" name="Genome Biol.">
        <title>A Drosophila full-length cDNA resource.</title>
        <authorList>
            <person name="Stapleton M."/>
            <person name="Carlson J.W."/>
            <person name="Brokstein P."/>
            <person name="Yu C."/>
            <person name="Champe M."/>
            <person name="George R.A."/>
            <person name="Guarin H."/>
            <person name="Kronmiller B."/>
            <person name="Pacleb J.M."/>
            <person name="Park S."/>
            <person name="Wan K.H."/>
            <person name="Rubin G.M."/>
            <person name="Celniker S.E."/>
        </authorList>
    </citation>
    <scope>NUCLEOTIDE SEQUENCE [LARGE SCALE MRNA]</scope>
    <source>
        <strain>Berkeley</strain>
        <tissue>Embryo</tissue>
    </source>
</reference>
<reference key="5">
    <citation type="journal article" date="2000" name="Nat. Biotechnol.">
        <title>Identification of in vivo DNA targets of chromatin proteins using tethered dam methyltransferase.</title>
        <authorList>
            <person name="van Steensel B."/>
            <person name="Henikoff S."/>
        </authorList>
    </citation>
    <scope>NUCLEOTIDE SEQUENCE [GENOMIC DNA] OF 233-324</scope>
</reference>
<organism>
    <name type="scientific">Drosophila melanogaster</name>
    <name type="common">Fruit fly</name>
    <dbReference type="NCBI Taxonomy" id="7227"/>
    <lineage>
        <taxon>Eukaryota</taxon>
        <taxon>Metazoa</taxon>
        <taxon>Ecdysozoa</taxon>
        <taxon>Arthropoda</taxon>
        <taxon>Hexapoda</taxon>
        <taxon>Insecta</taxon>
        <taxon>Pterygota</taxon>
        <taxon>Neoptera</taxon>
        <taxon>Endopterygota</taxon>
        <taxon>Diptera</taxon>
        <taxon>Brachycera</taxon>
        <taxon>Muscomorpha</taxon>
        <taxon>Ephydroidea</taxon>
        <taxon>Drosophilidae</taxon>
        <taxon>Drosophila</taxon>
        <taxon>Sophophora</taxon>
    </lineage>
</organism>
<name>GNAL_DROME</name>
<sequence length="457" mass="52753">MSGITLTKLTQERISIPNNNVITNGVENNIDSDTLSGTLTHLMEEHRTRVGAVTGPEAATTSTDGLISNGAERLRLQGSRLQTSRFACFRCCGNIITYLVRLRSTPEELEQRYKSKEIDKFLEKEKHTFRRQVKLLLLGAGESGKSTFLKQMRIIHGVNFDYELLLEYQSVIYQNVIRGMQVLLDAREKLNIAWGSDGREQDAYDAKLMECNSLDVPKFMEYAPPISRLWQDRGIRRAFERRREFQISDSVSYFLDEIQRLATPDYVPTHKDILHCRKATKGVYEFCVKVQNIPFVFVDVGGQRTQRQKWTRCFDSSVTSIIFLVSSSEFDQVLAEDRKTNRLEESKNIFDTIVNNATFKGISIILFLNKTDLLEQKVCNPETDIRWYYPHFNGNPHSVLDVQNFILQMFMSVRRSSSISRIYHHFTTAIDTRNINVVFNSVKDTILQRNLNALMLQ</sequence>
<accession>P25157</accession>
<accession>Q7PL79</accession>
<accession>Q9U3X3</accession>
<dbReference type="EMBL" id="M94285">
    <property type="protein sequence ID" value="AAA82939.1"/>
    <property type="molecule type" value="mRNA"/>
</dbReference>
<dbReference type="EMBL" id="AE014134">
    <property type="protein sequence ID" value="EAA46036.2"/>
    <property type="molecule type" value="Genomic_DNA"/>
</dbReference>
<dbReference type="EMBL" id="AY089534">
    <property type="protein sequence ID" value="AAL90272.1"/>
    <property type="molecule type" value="mRNA"/>
</dbReference>
<dbReference type="EMBL" id="AF211849">
    <property type="protein sequence ID" value="AAF17622.1"/>
    <property type="molecule type" value="Genomic_DNA"/>
</dbReference>
<dbReference type="PIR" id="A38567">
    <property type="entry name" value="A38567"/>
</dbReference>
<dbReference type="RefSeq" id="NP_001036421.1">
    <property type="nucleotide sequence ID" value="NM_001042956.2"/>
</dbReference>
<dbReference type="RefSeq" id="NP_001260696.1">
    <property type="nucleotide sequence ID" value="NM_001273767.1"/>
</dbReference>
<dbReference type="SMR" id="P25157"/>
<dbReference type="BioGRID" id="78256">
    <property type="interactions" value="7"/>
</dbReference>
<dbReference type="FunCoup" id="P25157">
    <property type="interactions" value="212"/>
</dbReference>
<dbReference type="STRING" id="7227.FBpp0306274"/>
<dbReference type="PaxDb" id="7227-FBpp0110418"/>
<dbReference type="DNASU" id="3355131"/>
<dbReference type="EnsemblMetazoa" id="FBtr0111126">
    <property type="protein sequence ID" value="FBpp0110418"/>
    <property type="gene ID" value="FBgn0000384"/>
</dbReference>
<dbReference type="EnsemblMetazoa" id="FBtr0334157">
    <property type="protein sequence ID" value="FBpp0306274"/>
    <property type="gene ID" value="FBgn0000384"/>
</dbReference>
<dbReference type="GeneID" id="3355131"/>
<dbReference type="KEGG" id="dme:Dmel_CG17678"/>
<dbReference type="UCSC" id="CG17678-RA">
    <property type="organism name" value="d. melanogaster"/>
</dbReference>
<dbReference type="AGR" id="FB:FBgn0000384"/>
<dbReference type="CTD" id="3355131"/>
<dbReference type="FlyBase" id="FBgn0000384">
    <property type="gene designation" value="cta"/>
</dbReference>
<dbReference type="VEuPathDB" id="VectorBase:FBgn0000384"/>
<dbReference type="eggNOG" id="KOG0082">
    <property type="taxonomic scope" value="Eukaryota"/>
</dbReference>
<dbReference type="GeneTree" id="ENSGT00940000168398"/>
<dbReference type="HOGENOM" id="CLU_014184_3_2_1"/>
<dbReference type="InParanoid" id="P25157"/>
<dbReference type="OMA" id="RFACMRC"/>
<dbReference type="OrthoDB" id="5817230at2759"/>
<dbReference type="PhylomeDB" id="P25157"/>
<dbReference type="Reactome" id="R-DME-193648">
    <property type="pathway name" value="NRAGE signals death through JNK"/>
</dbReference>
<dbReference type="Reactome" id="R-DME-416482">
    <property type="pathway name" value="G alpha (12/13) signalling events"/>
</dbReference>
<dbReference type="Reactome" id="R-DME-428930">
    <property type="pathway name" value="Thromboxane signalling through TP receptor"/>
</dbReference>
<dbReference type="Reactome" id="R-DME-9013148">
    <property type="pathway name" value="CDC42 GTPase cycle"/>
</dbReference>
<dbReference type="Reactome" id="R-DME-9013149">
    <property type="pathway name" value="RAC1 GTPase cycle"/>
</dbReference>
<dbReference type="BioGRID-ORCS" id="3355131">
    <property type="hits" value="0 hits in 3 CRISPR screens"/>
</dbReference>
<dbReference type="ChiTaRS" id="cta">
    <property type="organism name" value="fly"/>
</dbReference>
<dbReference type="GenomeRNAi" id="3355131"/>
<dbReference type="PRO" id="PR:P25157"/>
<dbReference type="Proteomes" id="UP000000803">
    <property type="component" value="Chromosome 2L"/>
</dbReference>
<dbReference type="Bgee" id="FBgn0000384">
    <property type="expression patterns" value="Expressed in spermatocyte cyst cell (Drosophila) in testis and 249 other cell types or tissues"/>
</dbReference>
<dbReference type="ExpressionAtlas" id="P25157">
    <property type="expression patterns" value="baseline"/>
</dbReference>
<dbReference type="GO" id="GO:0031526">
    <property type="term" value="C:brush border membrane"/>
    <property type="evidence" value="ECO:0000318"/>
    <property type="project" value="GO_Central"/>
</dbReference>
<dbReference type="GO" id="GO:0005737">
    <property type="term" value="C:cytoplasm"/>
    <property type="evidence" value="ECO:0000318"/>
    <property type="project" value="GO_Central"/>
</dbReference>
<dbReference type="GO" id="GO:0005829">
    <property type="term" value="C:cytosol"/>
    <property type="evidence" value="ECO:0000304"/>
    <property type="project" value="FlyBase"/>
</dbReference>
<dbReference type="GO" id="GO:0005834">
    <property type="term" value="C:heterotrimeric G-protein complex"/>
    <property type="evidence" value="ECO:0000250"/>
    <property type="project" value="FlyBase"/>
</dbReference>
<dbReference type="GO" id="GO:0005886">
    <property type="term" value="C:plasma membrane"/>
    <property type="evidence" value="ECO:0000314"/>
    <property type="project" value="FlyBase"/>
</dbReference>
<dbReference type="GO" id="GO:0031752">
    <property type="term" value="F:D5 dopamine receptor binding"/>
    <property type="evidence" value="ECO:0000318"/>
    <property type="project" value="GO_Central"/>
</dbReference>
<dbReference type="GO" id="GO:0003925">
    <property type="term" value="F:G protein activity"/>
    <property type="evidence" value="ECO:0000304"/>
    <property type="project" value="FlyBase"/>
</dbReference>
<dbReference type="GO" id="GO:0031683">
    <property type="term" value="F:G-protein beta/gamma-subunit complex binding"/>
    <property type="evidence" value="ECO:0000318"/>
    <property type="project" value="GO_Central"/>
</dbReference>
<dbReference type="GO" id="GO:0005525">
    <property type="term" value="F:GTP binding"/>
    <property type="evidence" value="ECO:0007669"/>
    <property type="project" value="UniProtKB-KW"/>
</dbReference>
<dbReference type="GO" id="GO:0003924">
    <property type="term" value="F:GTPase activity"/>
    <property type="evidence" value="ECO:0000250"/>
    <property type="project" value="FlyBase"/>
</dbReference>
<dbReference type="GO" id="GO:0030695">
    <property type="term" value="F:GTPase regulator activity"/>
    <property type="evidence" value="ECO:0000304"/>
    <property type="project" value="FlyBase"/>
</dbReference>
<dbReference type="GO" id="GO:0046872">
    <property type="term" value="F:metal ion binding"/>
    <property type="evidence" value="ECO:0007669"/>
    <property type="project" value="UniProtKB-KW"/>
</dbReference>
<dbReference type="GO" id="GO:0070252">
    <property type="term" value="P:actin-mediated cell contraction"/>
    <property type="evidence" value="ECO:0000316"/>
    <property type="project" value="FlyBase"/>
</dbReference>
<dbReference type="GO" id="GO:0007188">
    <property type="term" value="P:adenylate cyclase-modulating G protein-coupled receptor signaling pathway"/>
    <property type="evidence" value="ECO:0000318"/>
    <property type="project" value="GO_Central"/>
</dbReference>
<dbReference type="GO" id="GO:0003384">
    <property type="term" value="P:apical constriction involved in gastrulation"/>
    <property type="evidence" value="ECO:0000316"/>
    <property type="project" value="FlyBase"/>
</dbReference>
<dbReference type="GO" id="GO:0060027">
    <property type="term" value="P:convergent extension involved in gastrulation"/>
    <property type="evidence" value="ECO:0000315"/>
    <property type="project" value="FlyBase"/>
</dbReference>
<dbReference type="GO" id="GO:0003380">
    <property type="term" value="P:establishment or maintenance of cytoskeleton polarity involved in gastrulation"/>
    <property type="evidence" value="ECO:0000315"/>
    <property type="project" value="FlyBase"/>
</dbReference>
<dbReference type="GO" id="GO:0007186">
    <property type="term" value="P:G protein-coupled receptor signaling pathway"/>
    <property type="evidence" value="ECO:0000304"/>
    <property type="project" value="FlyBase"/>
</dbReference>
<dbReference type="GO" id="GO:0010004">
    <property type="term" value="P:gastrulation involving germ band extension"/>
    <property type="evidence" value="ECO:0000315"/>
    <property type="project" value="FlyBase"/>
</dbReference>
<dbReference type="GO" id="GO:0048383">
    <property type="term" value="P:mesectoderm development"/>
    <property type="evidence" value="ECO:0000315"/>
    <property type="project" value="FlyBase"/>
</dbReference>
<dbReference type="GO" id="GO:0016476">
    <property type="term" value="P:regulation of embryonic cell shape"/>
    <property type="evidence" value="ECO:0000315"/>
    <property type="project" value="FlyBase"/>
</dbReference>
<dbReference type="GO" id="GO:0010470">
    <property type="term" value="P:regulation of gastrulation"/>
    <property type="evidence" value="ECO:0000315"/>
    <property type="project" value="FlyBase"/>
</dbReference>
<dbReference type="GO" id="GO:0043519">
    <property type="term" value="P:regulation of myosin II filament organization"/>
    <property type="evidence" value="ECO:0000315"/>
    <property type="project" value="FlyBase"/>
</dbReference>
<dbReference type="GO" id="GO:0007266">
    <property type="term" value="P:Rho protein signal transduction"/>
    <property type="evidence" value="ECO:0000318"/>
    <property type="project" value="GO_Central"/>
</dbReference>
<dbReference type="CDD" id="cd00066">
    <property type="entry name" value="G-alpha"/>
    <property type="match status" value="1"/>
</dbReference>
<dbReference type="FunFam" id="1.10.400.10:FF:000002">
    <property type="entry name" value="guanine nucleotide-binding protein G(Q) subunit alpha"/>
    <property type="match status" value="1"/>
</dbReference>
<dbReference type="FunFam" id="3.40.50.300:FF:000692">
    <property type="entry name" value="Guanine nucleotide-binding protein subunit alpha"/>
    <property type="match status" value="2"/>
</dbReference>
<dbReference type="Gene3D" id="1.10.400.10">
    <property type="entry name" value="GI Alpha 1, domain 2-like"/>
    <property type="match status" value="1"/>
</dbReference>
<dbReference type="Gene3D" id="3.40.50.300">
    <property type="entry name" value="P-loop containing nucleotide triphosphate hydrolases"/>
    <property type="match status" value="1"/>
</dbReference>
<dbReference type="InterPro" id="IPR000469">
    <property type="entry name" value="Gprotein_alpha_12/13"/>
</dbReference>
<dbReference type="InterPro" id="IPR001019">
    <property type="entry name" value="Gprotein_alpha_su"/>
</dbReference>
<dbReference type="InterPro" id="IPR011025">
    <property type="entry name" value="GproteinA_insert"/>
</dbReference>
<dbReference type="InterPro" id="IPR027417">
    <property type="entry name" value="P-loop_NTPase"/>
</dbReference>
<dbReference type="PANTHER" id="PTHR10218">
    <property type="entry name" value="GTP-BINDING PROTEIN ALPHA SUBUNIT"/>
    <property type="match status" value="1"/>
</dbReference>
<dbReference type="PANTHER" id="PTHR10218:SF360">
    <property type="entry name" value="GUANINE NUCLEOTIDE-BINDING PROTEIN SUBUNIT ALPHA HOMOLOG"/>
    <property type="match status" value="1"/>
</dbReference>
<dbReference type="Pfam" id="PF00503">
    <property type="entry name" value="G-alpha"/>
    <property type="match status" value="1"/>
</dbReference>
<dbReference type="PRINTS" id="PR00318">
    <property type="entry name" value="GPROTEINA"/>
</dbReference>
<dbReference type="PRINTS" id="PR00440">
    <property type="entry name" value="GPROTEINA12"/>
</dbReference>
<dbReference type="SMART" id="SM00275">
    <property type="entry name" value="G_alpha"/>
    <property type="match status" value="1"/>
</dbReference>
<dbReference type="SUPFAM" id="SSF52540">
    <property type="entry name" value="P-loop containing nucleoside triphosphate hydrolases"/>
    <property type="match status" value="1"/>
</dbReference>
<dbReference type="SUPFAM" id="SSF47895">
    <property type="entry name" value="Transducin (alpha subunit), insertion domain"/>
    <property type="match status" value="1"/>
</dbReference>
<dbReference type="PROSITE" id="PS51882">
    <property type="entry name" value="G_ALPHA"/>
    <property type="match status" value="1"/>
</dbReference>
<proteinExistence type="evidence at transcript level"/>
<keyword id="KW-0963">Cytoplasm</keyword>
<keyword id="KW-0217">Developmental protein</keyword>
<keyword id="KW-0306">Gastrulation</keyword>
<keyword id="KW-0342">GTP-binding</keyword>
<keyword id="KW-0460">Magnesium</keyword>
<keyword id="KW-0479">Metal-binding</keyword>
<keyword id="KW-0547">Nucleotide-binding</keyword>
<keyword id="KW-1185">Reference proteome</keyword>
<keyword id="KW-0807">Transducer</keyword>
<comment type="function">
    <text evidence="3">May play a role in a signal transduction pathway used during gastrulation. Required specifically for the ventral furrow and posterior midgut invaginations, where it is necessary for coordinating cell shape changes.</text>
</comment>
<comment type="function">
    <text evidence="3">Guanine nucleotide-binding proteins (G proteins) are involved as modulators or transducers in various transmembrane signaling systems.</text>
</comment>
<comment type="subunit">
    <text>G proteins are composed of 3 units; alpha, beta and gamma. The alpha chain contains the guanine nucleotide binding site.</text>
</comment>
<comment type="subcellular location">
    <subcellularLocation>
        <location evidence="3">Cytoplasm</location>
    </subcellularLocation>
</comment>
<comment type="tissue specificity">
    <text evidence="3">In ovary, expressed in nurse cells and oocyte. In early embryos, distributed uniformly. At the extended germband stage, accumulates in the mesoderm.</text>
</comment>
<comment type="developmental stage">
    <text evidence="3">Expressed throughout oogenesis. In early embryos, expression drops during cellularization, remains low throughout gastrulation and increases once germband extension has begun.</text>
</comment>
<comment type="similarity">
    <text evidence="4">Belongs to the G-alpha family. G(12) subfamily.</text>
</comment>
<evidence type="ECO:0000250" key="1"/>
<evidence type="ECO:0000255" key="2">
    <source>
        <dbReference type="PROSITE-ProRule" id="PRU01230"/>
    </source>
</evidence>
<evidence type="ECO:0000269" key="3">
    <source>
    </source>
</evidence>
<evidence type="ECO:0000305" key="4"/>
<gene>
    <name type="primary">cta</name>
    <name type="synonym">CTR</name>
    <name type="ORF">CG17678</name>
</gene>